<evidence type="ECO:0000255" key="1"/>
<evidence type="ECO:0000269" key="2">
    <source>
    </source>
</evidence>
<evidence type="ECO:0000269" key="3">
    <source>
    </source>
</evidence>
<evidence type="ECO:0000305" key="4"/>
<evidence type="ECO:0000312" key="5">
    <source>
        <dbReference type="EMBL" id="ADR72966.1"/>
    </source>
</evidence>
<evidence type="ECO:0007829" key="6">
    <source>
        <dbReference type="PDB" id="7WZG"/>
    </source>
</evidence>
<reference evidence="4" key="1">
    <citation type="journal article" date="2010" name="Proc. Natl. Acad. Sci. U.S.A.">
        <title>Genome mining and genetic analysis of cypemycin biosynthesis reveal an unusual class of posttranslationally modified peptides.</title>
        <authorList>
            <person name="Claesen J."/>
            <person name="Bibb M."/>
        </authorList>
    </citation>
    <scope>NUCLEOTIDE SEQUENCE [GENOMIC DNA]</scope>
    <scope>FUNCTION</scope>
    <scope>CATALYTIC ACTIVITY</scope>
    <source>
        <strain evidence="2">OH-4156</strain>
    </source>
</reference>
<reference key="2">
    <citation type="journal article" date="2012" name="FEBS Lett.">
        <title>Catalytic promiscuity of a bacterial alpha-N-methyltransferase.</title>
        <authorList>
            <person name="Zhang Q."/>
            <person name="van der Donk W.A."/>
        </authorList>
    </citation>
    <scope>CATALYTIC ACTIVITY</scope>
    <scope>SUBSTRATE SPECIFICITY</scope>
</reference>
<protein>
    <recommendedName>
        <fullName>Cypemycin N-terminal methyltransferase</fullName>
        <ecNumber>2.1.1.301</ecNumber>
    </recommendedName>
</protein>
<feature type="chain" id="PRO_0000408759" description="Cypemycin N-terminal methyltransferase">
    <location>
        <begin position="1"/>
        <end position="245"/>
    </location>
</feature>
<feature type="helix" evidence="6">
    <location>
        <begin position="6"/>
        <end position="9"/>
    </location>
</feature>
<feature type="helix" evidence="6">
    <location>
        <begin position="11"/>
        <end position="22"/>
    </location>
</feature>
<feature type="helix" evidence="6">
    <location>
        <begin position="26"/>
        <end position="33"/>
    </location>
</feature>
<feature type="strand" evidence="6">
    <location>
        <begin position="42"/>
        <end position="46"/>
    </location>
</feature>
<feature type="helix" evidence="6">
    <location>
        <begin position="52"/>
        <end position="59"/>
    </location>
</feature>
<feature type="strand" evidence="6">
    <location>
        <begin position="63"/>
        <end position="69"/>
    </location>
</feature>
<feature type="helix" evidence="6">
    <location>
        <begin position="71"/>
        <end position="81"/>
    </location>
</feature>
<feature type="strand" evidence="6">
    <location>
        <begin position="86"/>
        <end position="90"/>
    </location>
</feature>
<feature type="strand" evidence="6">
    <location>
        <begin position="102"/>
        <end position="107"/>
    </location>
</feature>
<feature type="helix" evidence="6">
    <location>
        <begin position="111"/>
        <end position="114"/>
    </location>
</feature>
<feature type="helix" evidence="6">
    <location>
        <begin position="118"/>
        <end position="130"/>
    </location>
</feature>
<feature type="strand" evidence="6">
    <location>
        <begin position="132"/>
        <end position="143"/>
    </location>
</feature>
<feature type="helix" evidence="6">
    <location>
        <begin position="145"/>
        <end position="149"/>
    </location>
</feature>
<feature type="turn" evidence="6">
    <location>
        <begin position="150"/>
        <end position="153"/>
    </location>
</feature>
<feature type="strand" evidence="6">
    <location>
        <begin position="156"/>
        <end position="161"/>
    </location>
</feature>
<feature type="strand" evidence="6">
    <location>
        <begin position="163"/>
        <end position="175"/>
    </location>
</feature>
<feature type="turn" evidence="6">
    <location>
        <begin position="176"/>
        <end position="179"/>
    </location>
</feature>
<feature type="strand" evidence="6">
    <location>
        <begin position="180"/>
        <end position="189"/>
    </location>
</feature>
<feature type="strand" evidence="6">
    <location>
        <begin position="192"/>
        <end position="201"/>
    </location>
</feature>
<feature type="helix" evidence="6">
    <location>
        <begin position="205"/>
        <end position="215"/>
    </location>
</feature>
<feature type="strand" evidence="6">
    <location>
        <begin position="217"/>
        <end position="225"/>
    </location>
</feature>
<feature type="strand" evidence="6">
    <location>
        <begin position="236"/>
        <end position="244"/>
    </location>
</feature>
<name>CYPM_STRSQ</name>
<gene>
    <name evidence="5" type="primary">cypM</name>
</gene>
<comment type="function">
    <text evidence="2">Involved in the biosynthesis of the lanaridin cypemycin. The enzyme can methylate a variety of oligopeptides, cyclic peptides and the epsilon-amino group of lysine.</text>
</comment>
<comment type="catalytic activity">
    <reaction evidence="2 3">
        <text>N-terminal L-alanyl-[cypemycin] + 2 S-adenosyl-L-methionine = N-terminal N,N-dimethyl-L-alanyl-[cypemycin] + 2 S-adenosyl-L-homocysteine + 3 H(+)</text>
        <dbReference type="Rhea" id="RHEA:14393"/>
        <dbReference type="Rhea" id="RHEA-COMP:9849"/>
        <dbReference type="Rhea" id="RHEA-COMP:9850"/>
        <dbReference type="ChEBI" id="CHEBI:15378"/>
        <dbReference type="ChEBI" id="CHEBI:57856"/>
        <dbReference type="ChEBI" id="CHEBI:59789"/>
        <dbReference type="ChEBI" id="CHEBI:64718"/>
        <dbReference type="ChEBI" id="CHEBI:77037"/>
        <dbReference type="EC" id="2.1.1.301"/>
    </reaction>
</comment>
<comment type="similarity">
    <text evidence="1">Belongs to the methyltransferase superfamily.</text>
</comment>
<accession>E5KIC0</accession>
<organism>
    <name type="scientific">Streptomyces sp</name>
    <dbReference type="NCBI Taxonomy" id="1931"/>
    <lineage>
        <taxon>Bacteria</taxon>
        <taxon>Bacillati</taxon>
        <taxon>Actinomycetota</taxon>
        <taxon>Actinomycetes</taxon>
        <taxon>Kitasatosporales</taxon>
        <taxon>Streptomycetaceae</taxon>
        <taxon>Streptomyces</taxon>
    </lineage>
</organism>
<dbReference type="EC" id="2.1.1.301"/>
<dbReference type="EMBL" id="HQ148718">
    <property type="protein sequence ID" value="ADR72966.1"/>
    <property type="molecule type" value="Genomic_DNA"/>
</dbReference>
<dbReference type="PDB" id="7WZG">
    <property type="method" value="X-ray"/>
    <property type="resolution" value="2.00 A"/>
    <property type="chains" value="A/B/C/D/E/F=1-245"/>
</dbReference>
<dbReference type="PDBsum" id="7WZG"/>
<dbReference type="SMR" id="E5KIC0"/>
<dbReference type="KEGG" id="ag:ADR72966"/>
<dbReference type="GO" id="GO:0008170">
    <property type="term" value="F:N-methyltransferase activity"/>
    <property type="evidence" value="ECO:0000314"/>
    <property type="project" value="UniProtKB"/>
</dbReference>
<dbReference type="GO" id="GO:0032259">
    <property type="term" value="P:methylation"/>
    <property type="evidence" value="ECO:0007669"/>
    <property type="project" value="UniProtKB-KW"/>
</dbReference>
<dbReference type="GO" id="GO:0030651">
    <property type="term" value="P:peptide antibiotic biosynthetic process"/>
    <property type="evidence" value="ECO:0000314"/>
    <property type="project" value="UniProtKB"/>
</dbReference>
<dbReference type="CDD" id="cd02440">
    <property type="entry name" value="AdoMet_MTases"/>
    <property type="match status" value="1"/>
</dbReference>
<dbReference type="Gene3D" id="3.40.50.150">
    <property type="entry name" value="Vaccinia Virus protein VP39"/>
    <property type="match status" value="1"/>
</dbReference>
<dbReference type="InterPro" id="IPR041698">
    <property type="entry name" value="Methyltransf_25"/>
</dbReference>
<dbReference type="InterPro" id="IPR050508">
    <property type="entry name" value="Methyltransf_Superfamily"/>
</dbReference>
<dbReference type="InterPro" id="IPR029063">
    <property type="entry name" value="SAM-dependent_MTases_sf"/>
</dbReference>
<dbReference type="PANTHER" id="PTHR42912">
    <property type="entry name" value="METHYLTRANSFERASE"/>
    <property type="match status" value="1"/>
</dbReference>
<dbReference type="Pfam" id="PF13649">
    <property type="entry name" value="Methyltransf_25"/>
    <property type="match status" value="1"/>
</dbReference>
<dbReference type="SUPFAM" id="SSF53335">
    <property type="entry name" value="S-adenosyl-L-methionine-dependent methyltransferases"/>
    <property type="match status" value="1"/>
</dbReference>
<proteinExistence type="evidence at protein level"/>
<keyword id="KW-0002">3D-structure</keyword>
<keyword id="KW-0489">Methyltransferase</keyword>
<keyword id="KW-0949">S-adenosyl-L-methionine</keyword>
<keyword id="KW-0808">Transferase</keyword>
<sequence length="245" mass="26525">MSDPSVYDETAIEAYDLVSSMLSPGAGLVAWVSSHRPLDGRTVLDLGCGTGVSSFALAEAGARVVAVDASRPSLDMLEKKRLDRDVEAVEGDFRDLTFDSTFDVVTMSRNTFFLAQEQEEKIALLRGIARHLKPGGAAFLDCTDPAEFQRAGGDARSVTYPLGRDRMVTVTQTADRAGQQILSIFLVQGATTLTAFHEQATWATLAEIRLMARIAGLEVTGVDGSYAGEPYTARSREMLVVLERQ</sequence>